<keyword id="KW-0963">Cytoplasm</keyword>
<keyword id="KW-0479">Metal-binding</keyword>
<keyword id="KW-0539">Nucleus</keyword>
<keyword id="KW-1185">Reference proteome</keyword>
<keyword id="KW-0677">Repeat</keyword>
<keyword id="KW-0808">Transferase</keyword>
<keyword id="KW-0833">Ubl conjugation pathway</keyword>
<keyword id="KW-0862">Zinc</keyword>
<keyword id="KW-0863">Zinc-finger</keyword>
<organism>
    <name type="scientific">Neurospora crassa (strain ATCC 24698 / 74-OR23-1A / CBS 708.71 / DSM 1257 / FGSC 987)</name>
    <dbReference type="NCBI Taxonomy" id="367110"/>
    <lineage>
        <taxon>Eukaryota</taxon>
        <taxon>Fungi</taxon>
        <taxon>Dikarya</taxon>
        <taxon>Ascomycota</taxon>
        <taxon>Pezizomycotina</taxon>
        <taxon>Sordariomycetes</taxon>
        <taxon>Sordariomycetidae</taxon>
        <taxon>Sordariales</taxon>
        <taxon>Sordariaceae</taxon>
        <taxon>Neurospora</taxon>
    </lineage>
</organism>
<name>LTN1_NEUCR</name>
<gene>
    <name type="primary">rkr-1</name>
    <name type="synonym">ltn-1</name>
    <name evidence="7" type="ORF">NCU06534</name>
</gene>
<reference key="1">
    <citation type="journal article" date="2003" name="Nature">
        <title>The genome sequence of the filamentous fungus Neurospora crassa.</title>
        <authorList>
            <person name="Galagan J.E."/>
            <person name="Calvo S.E."/>
            <person name="Borkovich K.A."/>
            <person name="Selker E.U."/>
            <person name="Read N.D."/>
            <person name="Jaffe D.B."/>
            <person name="FitzHugh W."/>
            <person name="Ma L.-J."/>
            <person name="Smirnov S."/>
            <person name="Purcell S."/>
            <person name="Rehman B."/>
            <person name="Elkins T."/>
            <person name="Engels R."/>
            <person name="Wang S."/>
            <person name="Nielsen C.B."/>
            <person name="Butler J."/>
            <person name="Endrizzi M."/>
            <person name="Qui D."/>
            <person name="Ianakiev P."/>
            <person name="Bell-Pedersen D."/>
            <person name="Nelson M.A."/>
            <person name="Werner-Washburne M."/>
            <person name="Selitrennikoff C.P."/>
            <person name="Kinsey J.A."/>
            <person name="Braun E.L."/>
            <person name="Zelter A."/>
            <person name="Schulte U."/>
            <person name="Kothe G.O."/>
            <person name="Jedd G."/>
            <person name="Mewes H.-W."/>
            <person name="Staben C."/>
            <person name="Marcotte E."/>
            <person name="Greenberg D."/>
            <person name="Roy A."/>
            <person name="Foley K."/>
            <person name="Naylor J."/>
            <person name="Stange-Thomann N."/>
            <person name="Barrett R."/>
            <person name="Gnerre S."/>
            <person name="Kamal M."/>
            <person name="Kamvysselis M."/>
            <person name="Mauceli E.W."/>
            <person name="Bielke C."/>
            <person name="Rudd S."/>
            <person name="Frishman D."/>
            <person name="Krystofova S."/>
            <person name="Rasmussen C."/>
            <person name="Metzenberg R.L."/>
            <person name="Perkins D.D."/>
            <person name="Kroken S."/>
            <person name="Cogoni C."/>
            <person name="Macino G."/>
            <person name="Catcheside D.E.A."/>
            <person name="Li W."/>
            <person name="Pratt R.J."/>
            <person name="Osmani S.A."/>
            <person name="DeSouza C.P.C."/>
            <person name="Glass N.L."/>
            <person name="Orbach M.J."/>
            <person name="Berglund J.A."/>
            <person name="Voelker R."/>
            <person name="Yarden O."/>
            <person name="Plamann M."/>
            <person name="Seiler S."/>
            <person name="Dunlap J.C."/>
            <person name="Radford A."/>
            <person name="Aramayo R."/>
            <person name="Natvig D.O."/>
            <person name="Alex L.A."/>
            <person name="Mannhaupt G."/>
            <person name="Ebbole D.J."/>
            <person name="Freitag M."/>
            <person name="Paulsen I."/>
            <person name="Sachs M.S."/>
            <person name="Lander E.S."/>
            <person name="Nusbaum C."/>
            <person name="Birren B.W."/>
        </authorList>
    </citation>
    <scope>NUCLEOTIDE SEQUENCE [LARGE SCALE GENOMIC DNA]</scope>
    <source>
        <strain>ATCC 24698 / 74-OR23-1A / CBS 708.71 / DSM 1257 / FGSC 987</strain>
    </source>
</reference>
<reference key="2">
    <citation type="journal article" date="2016" name="Proc. Natl. Acad. Sci. U.S.A.">
        <title>Structure and function of the yeast listerin (Ltn1) conserved N-terminal domain in binding to stalled 60S ribosomal subunits.</title>
        <authorList>
            <person name="Doamekpor S.K."/>
            <person name="Lee J.W."/>
            <person name="Hepowit N.L."/>
            <person name="Wu C."/>
            <person name="Charenton C."/>
            <person name="Leonard M."/>
            <person name="Bengtson M.H."/>
            <person name="Rajashankar K.R."/>
            <person name="Sachs M.S."/>
            <person name="Lima C.D."/>
            <person name="Joazeiro C.A."/>
        </authorList>
    </citation>
    <scope>FUNCTION</scope>
</reference>
<accession>Q7S834</accession>
<proteinExistence type="inferred from homology"/>
<protein>
    <recommendedName>
        <fullName evidence="6">E3 ubiquitin-protein ligase listerin</fullName>
        <ecNumber evidence="2">2.3.2.27</ecNumber>
    </recommendedName>
    <alternativeName>
        <fullName>RING domain mutant killed by rtf1 deletion protein 1 homolog</fullName>
    </alternativeName>
</protein>
<sequence>MKKGGFGSGGFGAFSSSTASLSYVAPPPDLSSVPQDVIVPFKNLLKRDSTTKSKALEEILACVKKSDQPVDDSVIDVWAQLYPRVAIDNNRRVRELSHNLLLELVKSAKKRIEKTLPKLVGPWVAGTFDKDKGVARAALAVSAHILDSDQKKAKFWIAFQGKLLEYSNEAIRETADSLSDERTTSKEDMEAKYYRVLGSSMAMIQHLLPTVKDDQYPDELKRFFDADTLWTLAASDDASVRRAFYQLVASYLDNKPSLLEPKLKDVGKVLVAEGPKKEQRGSAVDLLRALISVTKRFPKVWGSKSPLDRLRPLVQKGSQGGSDEFWTELDQLLAILPTSSPDYAANAPAFLKSMRTAITSREERRQNAASAWACYLNTVDRITAGSTPSPDFLQENLYPLTREYLHPSTETSTWAYAQPPHVFKAWKIVPYTTNEQVRSSAKEEWQKLGDDFAAGLSNSLPEVSPDYEKSQLELAAQGDRWFTLVQGFLRGAPSQQSFDGDADLPSVVASTSRKLLESAQDLLARRNYKPFCAAAVLKAAFTKAPVLCAKSDLIKKVFPLDDQEAFEKIVVSRSLPFLASCLGAVTPDQPDFSEQVWVKLIDAALSHGFPSGAPIVKELVSVPLPQTVAQKSEALQNFIVEAWQDFFKEEPSSPVVEQLCRASISHSVVDDKTLQSLASSFAQDIGVAGKYDPEFKALDLLLRNKSALFADAPVDLFTRLLSLEEISDSEKATKVAAIRSLIQKQYGGNKLWLEVIRLSLAEADPSSLDINTLIRHAKEILSSGVPLTDLLPSAKAWNTELYSFLRDNPDPSLSITSSFGGAYFLATESEGSTLTTQKRDRQGRSIPARMAIYTTNLFTDVDLESVQADLLELIFLTAVLANDDLTVMKENGLWSLPASEDIRTERSDEIQSFLDLGTSLLARVAGASASWKEGDLDGTSLAEMLIQSLLQQAVDFSAKALYASKALTELFQALVSVHGYPAGAKFDEWFNKLGIMKATPQTVFAAIAFLTGFDEGLASSRAVANLYNRLVSDIVGCFPSSPKTLYNVVLLNICLSVYPPAKTPVEQRKLVFALKQFTTWVQTPDEMTFGLTAEVCKGIHRILPNVAQVYGPYWREAIDYCLLLWEKARNDTPQRWPAYVLPSIRLISSMETLEDPNDDLVEALEETAVDRSKALIRLLELPHDVVNTARQILDETLCRAVQKIPLKHLTSEKDLLTNLYGLLSSGSREVQTAAFGLLHRALPAQQEEEVLETLLEEKVAKVPDELLSIIQAVPELEKYTDEELAGFPVDVRSYLLGWHLVFDAYNQAPLQVRKQYTDSLKADNSLNALLELMFDVLGHSTGQALNLDKNTFSAEHIRSYDVSQSEEGTKERDMQWLLVHLFYLSLKFLPGLVKSWYLDLRSKQTKIALDSWMAKYYAPLLISDALDEVNDWASSQEAPQEDEKELRVRVNRTAKEVSAGYEIDEDFASIAIKIPAGYPLESVEVIGENRVAVNEKKWQSWVRATQGVITFANGSITDGLAAFRRNIIGALKGHTECPICYAVVSADKKLPDKRCSTCNNLFHRLCLYKWFQNSNKNTCPLCRNPIDYLGSSTRRGGGGD</sequence>
<comment type="function">
    <text evidence="2 5">E3 ubiquitin-protein ligase component of the ribosome quality control complex (RQC), a ribosome-associated complex that mediates ubiquitination and extraction of incompletely synthesized nascent chains for proteasomal degradation (PubMed:27385828). Mediates ubiquitination of proteins derived from mRNAs lacking stop codons (non-stop proteins) and other translation arrest products induced by poly-lysine sequences and tandem rare codons (PubMed:27385828). Ubiquitination leads to CDC48 recruitment for extraction and degradation of the incomplete translation product. May indirectly play a role in chromatin function and transcription (By similarity).</text>
</comment>
<comment type="catalytic activity">
    <reaction evidence="2">
        <text>S-ubiquitinyl-[E2 ubiquitin-conjugating enzyme]-L-cysteine + [acceptor protein]-L-lysine = [E2 ubiquitin-conjugating enzyme]-L-cysteine + N(6)-ubiquitinyl-[acceptor protein]-L-lysine.</text>
        <dbReference type="EC" id="2.3.2.27"/>
    </reaction>
</comment>
<comment type="pathway">
    <text evidence="2">Protein modification; protein ubiquitination.</text>
</comment>
<comment type="subunit">
    <text evidence="2">Component of the ribosome quality control complex (RQC), composed of the E3 ubiquitin ligase RKR1/LTN1, RQC1 and RQC2, as well as CDC48 and its ubiquitin-binding cofactors associated with the 60S ribosomal subunits.</text>
</comment>
<comment type="subcellular location">
    <subcellularLocation>
        <location evidence="2">Nucleus</location>
    </subcellularLocation>
    <subcellularLocation>
        <location evidence="2">Cytoplasm</location>
        <location evidence="2">Cytosol</location>
    </subcellularLocation>
</comment>
<comment type="domain">
    <text evidence="1">The VLRF1 domain mediates binding to the 60S ribosomal subunit.</text>
</comment>
<comment type="similarity">
    <text evidence="6">Belongs to the LTN1 family.</text>
</comment>
<feature type="chain" id="PRO_0000458162" description="E3 ubiquitin-protein ligase listerin">
    <location>
        <begin position="1"/>
        <end position="1600"/>
    </location>
</feature>
<feature type="repeat" description="HEAT 1" evidence="3">
    <location>
        <begin position="31"/>
        <end position="65"/>
    </location>
</feature>
<feature type="repeat" description="HEAT 2" evidence="3">
    <location>
        <begin position="114"/>
        <end position="150"/>
    </location>
</feature>
<feature type="repeat" description="HEAT 3" evidence="3">
    <location>
        <begin position="161"/>
        <end position="202"/>
    </location>
</feature>
<feature type="repeat" description="HEAT 4" evidence="3">
    <location>
        <begin position="245"/>
        <end position="288"/>
    </location>
</feature>
<feature type="repeat" description="HEAT 5" evidence="3">
    <location>
        <begin position="291"/>
        <end position="344"/>
    </location>
</feature>
<feature type="repeat" description="HEAT 6" evidence="3">
    <location>
        <begin position="526"/>
        <end position="606"/>
    </location>
</feature>
<feature type="repeat" description="HEAT 7" evidence="3">
    <location>
        <begin position="853"/>
        <end position="904"/>
    </location>
</feature>
<feature type="repeat" description="HEAT 8" evidence="3">
    <location>
        <begin position="962"/>
        <end position="986"/>
    </location>
</feature>
<feature type="repeat" description="HEAT 9" evidence="3">
    <location>
        <begin position="1045"/>
        <end position="1083"/>
    </location>
</feature>
<feature type="repeat" description="HEAT 10" evidence="3">
    <location>
        <begin position="1289"/>
        <end position="1324"/>
    </location>
</feature>
<feature type="repeat" description="HEAT 11" evidence="3">
    <location>
        <begin position="1325"/>
        <end position="1369"/>
    </location>
</feature>
<feature type="zinc finger region" description="RING-type; degenerate" evidence="4">
    <location>
        <begin position="1537"/>
        <end position="1583"/>
    </location>
</feature>
<dbReference type="EC" id="2.3.2.27" evidence="2"/>
<dbReference type="EMBL" id="CM002239">
    <property type="protein sequence ID" value="EAA32495.1"/>
    <property type="molecule type" value="Genomic_DNA"/>
</dbReference>
<dbReference type="RefSeq" id="XP_961731.1">
    <property type="nucleotide sequence ID" value="XM_956638.2"/>
</dbReference>
<dbReference type="SMR" id="Q7S834"/>
<dbReference type="FunCoup" id="Q7S834">
    <property type="interactions" value="568"/>
</dbReference>
<dbReference type="STRING" id="367110.Q7S834"/>
<dbReference type="PaxDb" id="5141-EFNCRP00000006345"/>
<dbReference type="EnsemblFungi" id="EAA32495">
    <property type="protein sequence ID" value="EAA32495"/>
    <property type="gene ID" value="NCU06534"/>
</dbReference>
<dbReference type="GeneID" id="3877879"/>
<dbReference type="KEGG" id="ncr:NCU06534"/>
<dbReference type="VEuPathDB" id="FungiDB:NCU06534"/>
<dbReference type="HOGENOM" id="CLU_000471_0_0_1"/>
<dbReference type="InParanoid" id="Q7S834"/>
<dbReference type="OMA" id="IYGSHWE"/>
<dbReference type="OrthoDB" id="6108at2759"/>
<dbReference type="UniPathway" id="UPA00143"/>
<dbReference type="Proteomes" id="UP000001805">
    <property type="component" value="Chromosome 4, Linkage Group IV"/>
</dbReference>
<dbReference type="GO" id="GO:0005829">
    <property type="term" value="C:cytosol"/>
    <property type="evidence" value="ECO:0000318"/>
    <property type="project" value="GO_Central"/>
</dbReference>
<dbReference type="GO" id="GO:0005634">
    <property type="term" value="C:nucleus"/>
    <property type="evidence" value="ECO:0007669"/>
    <property type="project" value="UniProtKB-SubCell"/>
</dbReference>
<dbReference type="GO" id="GO:1990112">
    <property type="term" value="C:RQC complex"/>
    <property type="evidence" value="ECO:0000318"/>
    <property type="project" value="GO_Central"/>
</dbReference>
<dbReference type="GO" id="GO:0043023">
    <property type="term" value="F:ribosomal large subunit binding"/>
    <property type="evidence" value="ECO:0000318"/>
    <property type="project" value="GO_Central"/>
</dbReference>
<dbReference type="GO" id="GO:0061630">
    <property type="term" value="F:ubiquitin protein ligase activity"/>
    <property type="evidence" value="ECO:0000318"/>
    <property type="project" value="GO_Central"/>
</dbReference>
<dbReference type="GO" id="GO:0008270">
    <property type="term" value="F:zinc ion binding"/>
    <property type="evidence" value="ECO:0007669"/>
    <property type="project" value="UniProtKB-KW"/>
</dbReference>
<dbReference type="GO" id="GO:0016567">
    <property type="term" value="P:protein ubiquitination"/>
    <property type="evidence" value="ECO:0007669"/>
    <property type="project" value="UniProtKB-UniPathway"/>
</dbReference>
<dbReference type="GO" id="GO:0072344">
    <property type="term" value="P:rescue of stalled ribosome"/>
    <property type="evidence" value="ECO:0000315"/>
    <property type="project" value="UniProtKB"/>
</dbReference>
<dbReference type="GO" id="GO:1990116">
    <property type="term" value="P:ribosome-associated ubiquitin-dependent protein catabolic process"/>
    <property type="evidence" value="ECO:0000315"/>
    <property type="project" value="UniProtKB"/>
</dbReference>
<dbReference type="CDD" id="cd16491">
    <property type="entry name" value="RING-CH-C4HC3_LTN1"/>
    <property type="match status" value="1"/>
</dbReference>
<dbReference type="FunFam" id="3.30.40.10:FF:000038">
    <property type="entry name" value="E3 ubiquitin-protein ligase listerin"/>
    <property type="match status" value="1"/>
</dbReference>
<dbReference type="Gene3D" id="1.25.10.10">
    <property type="entry name" value="Leucine-rich Repeat Variant"/>
    <property type="match status" value="1"/>
</dbReference>
<dbReference type="Gene3D" id="3.30.40.10">
    <property type="entry name" value="Zinc/RING finger domain, C3HC4 (zinc finger)"/>
    <property type="match status" value="1"/>
</dbReference>
<dbReference type="InterPro" id="IPR011989">
    <property type="entry name" value="ARM-like"/>
</dbReference>
<dbReference type="InterPro" id="IPR016024">
    <property type="entry name" value="ARM-type_fold"/>
</dbReference>
<dbReference type="InterPro" id="IPR039795">
    <property type="entry name" value="LTN1/Rkr1"/>
</dbReference>
<dbReference type="InterPro" id="IPR054477">
    <property type="entry name" value="LTN1_E3_ligase_6th"/>
</dbReference>
<dbReference type="InterPro" id="IPR054476">
    <property type="entry name" value="Ltn1_N"/>
</dbReference>
<dbReference type="InterPro" id="IPR054478">
    <property type="entry name" value="LTN1_UBC"/>
</dbReference>
<dbReference type="InterPro" id="IPR039804">
    <property type="entry name" value="RING-CH-C4HC3_LTN1"/>
</dbReference>
<dbReference type="InterPro" id="IPR057030">
    <property type="entry name" value="TPR_Rkr-1"/>
</dbReference>
<dbReference type="InterPro" id="IPR001841">
    <property type="entry name" value="Znf_RING"/>
</dbReference>
<dbReference type="InterPro" id="IPR011016">
    <property type="entry name" value="Znf_RING-CH"/>
</dbReference>
<dbReference type="InterPro" id="IPR013083">
    <property type="entry name" value="Znf_RING/FYVE/PHD"/>
</dbReference>
<dbReference type="PANTHER" id="PTHR12389:SF0">
    <property type="entry name" value="E3 UBIQUITIN-PROTEIN LIGASE LISTERIN"/>
    <property type="match status" value="1"/>
</dbReference>
<dbReference type="PANTHER" id="PTHR12389">
    <property type="entry name" value="ZINC FINGER PROTEIN 294"/>
    <property type="match status" value="1"/>
</dbReference>
<dbReference type="Pfam" id="PF22958">
    <property type="entry name" value="Ltn1_1st"/>
    <property type="match status" value="1"/>
</dbReference>
<dbReference type="Pfam" id="PF22999">
    <property type="entry name" value="LTN1_E3_ligase_6th"/>
    <property type="match status" value="1"/>
</dbReference>
<dbReference type="Pfam" id="PF23280">
    <property type="entry name" value="TPR_26"/>
    <property type="match status" value="1"/>
</dbReference>
<dbReference type="Pfam" id="PF23009">
    <property type="entry name" value="UBC_like"/>
    <property type="match status" value="1"/>
</dbReference>
<dbReference type="Pfam" id="PF13639">
    <property type="entry name" value="zf-RING_2"/>
    <property type="match status" value="1"/>
</dbReference>
<dbReference type="SMART" id="SM01197">
    <property type="entry name" value="FANCL_C"/>
    <property type="match status" value="1"/>
</dbReference>
<dbReference type="SMART" id="SM00184">
    <property type="entry name" value="RING"/>
    <property type="match status" value="1"/>
</dbReference>
<dbReference type="SMART" id="SM00744">
    <property type="entry name" value="RINGv"/>
    <property type="match status" value="1"/>
</dbReference>
<dbReference type="SUPFAM" id="SSF48371">
    <property type="entry name" value="ARM repeat"/>
    <property type="match status" value="1"/>
</dbReference>
<dbReference type="SUPFAM" id="SSF57850">
    <property type="entry name" value="RING/U-box"/>
    <property type="match status" value="1"/>
</dbReference>
<dbReference type="PROSITE" id="PS50089">
    <property type="entry name" value="ZF_RING_2"/>
    <property type="match status" value="1"/>
</dbReference>
<evidence type="ECO:0000250" key="1">
    <source>
        <dbReference type="UniProtKB" id="Q04311"/>
    </source>
</evidence>
<evidence type="ECO:0000250" key="2">
    <source>
        <dbReference type="UniProtKB" id="Q04781"/>
    </source>
</evidence>
<evidence type="ECO:0000255" key="3"/>
<evidence type="ECO:0000255" key="4">
    <source>
        <dbReference type="PROSITE-ProRule" id="PRU00175"/>
    </source>
</evidence>
<evidence type="ECO:0000269" key="5">
    <source>
    </source>
</evidence>
<evidence type="ECO:0000305" key="6"/>
<evidence type="ECO:0000312" key="7">
    <source>
        <dbReference type="EMBL" id="EAA32495.1"/>
    </source>
</evidence>